<reference key="1">
    <citation type="submission" date="2006-09" db="EMBL/GenBank/DDBJ databases">
        <authorList>
            <consortium name="NIH - Xenopus Gene Collection (XGC) project"/>
        </authorList>
    </citation>
    <scope>NUCLEOTIDE SEQUENCE [LARGE SCALE MRNA]</scope>
    <source>
        <tissue>Fat body</tissue>
    </source>
</reference>
<evidence type="ECO:0000250" key="1"/>
<evidence type="ECO:0000305" key="2"/>
<accession>Q0IHF8</accession>
<protein>
    <recommendedName>
        <fullName>Pancreatic progenitor cell differentiation and proliferation factor B</fullName>
    </recommendedName>
    <alternativeName>
        <fullName>Exocrine differentiation and proliferation factor B</fullName>
    </alternativeName>
</protein>
<keyword id="KW-0217">Developmental protein</keyword>
<keyword id="KW-0221">Differentiation</keyword>
<keyword id="KW-1185">Reference proteome</keyword>
<organism>
    <name type="scientific">Xenopus laevis</name>
    <name type="common">African clawed frog</name>
    <dbReference type="NCBI Taxonomy" id="8355"/>
    <lineage>
        <taxon>Eukaryota</taxon>
        <taxon>Metazoa</taxon>
        <taxon>Chordata</taxon>
        <taxon>Craniata</taxon>
        <taxon>Vertebrata</taxon>
        <taxon>Euteleostomi</taxon>
        <taxon>Amphibia</taxon>
        <taxon>Batrachia</taxon>
        <taxon>Anura</taxon>
        <taxon>Pipoidea</taxon>
        <taxon>Pipidae</taxon>
        <taxon>Xenopodinae</taxon>
        <taxon>Xenopus</taxon>
        <taxon>Xenopus</taxon>
    </lineage>
</organism>
<gene>
    <name type="primary">ppdpf-b</name>
    <name type="synonym">exdpf-b</name>
</gene>
<comment type="function">
    <text evidence="1">Probable regulator of exocrine pancreas development.</text>
</comment>
<comment type="similarity">
    <text evidence="2">Belongs to the PPDPF family.</text>
</comment>
<dbReference type="EMBL" id="BC123172">
    <property type="protein sequence ID" value="AAI23173.1"/>
    <property type="molecule type" value="mRNA"/>
</dbReference>
<dbReference type="RefSeq" id="NP_001090325.1">
    <property type="nucleotide sequence ID" value="NM_001096856.1"/>
</dbReference>
<dbReference type="DNASU" id="779234"/>
<dbReference type="GeneID" id="779234"/>
<dbReference type="KEGG" id="xla:779234"/>
<dbReference type="AGR" id="Xenbase:XB-GENE-6252795"/>
<dbReference type="CTD" id="779234"/>
<dbReference type="Xenbase" id="XB-GENE-6252795">
    <property type="gene designation" value="ppdpf.L"/>
</dbReference>
<dbReference type="OMA" id="WASCFFR"/>
<dbReference type="OrthoDB" id="9411431at2759"/>
<dbReference type="Proteomes" id="UP000186698">
    <property type="component" value="Chromosome 9_10L"/>
</dbReference>
<dbReference type="Bgee" id="779234">
    <property type="expression patterns" value="Expressed in lung and 19 other cell types or tissues"/>
</dbReference>
<dbReference type="GO" id="GO:0030154">
    <property type="term" value="P:cell differentiation"/>
    <property type="evidence" value="ECO:0007669"/>
    <property type="project" value="UniProtKB-KW"/>
</dbReference>
<dbReference type="InterPro" id="IPR026754">
    <property type="entry name" value="PPDPF"/>
</dbReference>
<dbReference type="PANTHER" id="PTHR14572">
    <property type="entry name" value="PANCREATIC PROGENITOR CELL DIFFERENTIATION AND PROLIFERATION FACTOR"/>
    <property type="match status" value="1"/>
</dbReference>
<dbReference type="Pfam" id="PF15060">
    <property type="entry name" value="PPDFL"/>
    <property type="match status" value="1"/>
</dbReference>
<dbReference type="PRINTS" id="PR02071">
    <property type="entry name" value="PPDPFACTOR"/>
</dbReference>
<feature type="chain" id="PRO_0000359769" description="Pancreatic progenitor cell differentiation and proliferation factor B">
    <location>
        <begin position="1"/>
        <end position="113"/>
    </location>
</feature>
<name>PDPFB_XENLA</name>
<proteinExistence type="inferred from homology"/>
<sequence length="113" mass="11953">MAAIPSSGSLVATHDYYRRRLGSTSSNSSCGSVDYSGEVIPHHPGLPKSDPGHWWASFFFGKPTHPVMTTVSESPENSGSFRITSGLVPCGLVQESVLKQKVGDTKSDSSPSA</sequence>